<proteinExistence type="evidence at protein level"/>
<dbReference type="GO" id="GO:0005576">
    <property type="term" value="C:extracellular region"/>
    <property type="evidence" value="ECO:0007669"/>
    <property type="project" value="UniProtKB-SubCell"/>
</dbReference>
<dbReference type="GO" id="GO:0007218">
    <property type="term" value="P:neuropeptide signaling pathway"/>
    <property type="evidence" value="ECO:0007669"/>
    <property type="project" value="UniProtKB-KW"/>
</dbReference>
<name>FAR4_AUSGA</name>
<evidence type="ECO:0000250" key="1">
    <source>
        <dbReference type="UniProtKB" id="P34405"/>
    </source>
</evidence>
<evidence type="ECO:0000255" key="2"/>
<evidence type="ECO:0000269" key="3">
    <source>
    </source>
</evidence>
<evidence type="ECO:0000303" key="4">
    <source>
    </source>
</evidence>
<evidence type="ECO:0000305" key="5"/>
<evidence type="ECO:0000305" key="6">
    <source>
    </source>
</evidence>
<accession>B3A0E2</accession>
<reference evidence="5" key="1">
    <citation type="journal article" date="2012" name="Syst. Biol.">
        <title>Peptidomics-based phylogeny and biogeography of Mantophasmatodea (Hexapoda).</title>
        <authorList>
            <person name="Predel R."/>
            <person name="Neupert S."/>
            <person name="Huetteroth W."/>
            <person name="Kahnt J."/>
            <person name="Waidelich D."/>
            <person name="Roth S."/>
        </authorList>
    </citation>
    <scope>PROTEIN SEQUENCE</scope>
    <scope>AMIDATION AT LEU-9</scope>
    <source>
        <tissue evidence="3">Thoracic perisympathetic organs</tissue>
    </source>
</reference>
<protein>
    <recommendedName>
        <fullName evidence="4">Extended FMRFamide-4</fullName>
        <shortName evidence="4">FMRFa-4</shortName>
    </recommendedName>
</protein>
<comment type="function">
    <text evidence="1">FMRFamides and FMRFamide-like peptides are neuropeptides.</text>
</comment>
<comment type="subcellular location">
    <subcellularLocation>
        <location evidence="6">Secreted</location>
    </subcellularLocation>
</comment>
<comment type="similarity">
    <text evidence="2">Belongs to the FARP (FMRF amide related peptide) family.</text>
</comment>
<feature type="peptide" id="PRO_0000421502" description="Extended FMRFamide-4" evidence="3">
    <location>
        <begin position="1"/>
        <end position="9"/>
    </location>
</feature>
<feature type="modified residue" description="Leucine amide" evidence="3">
    <location>
        <position position="9"/>
    </location>
</feature>
<feature type="unsure residue" description="L or I" evidence="3">
    <location>
        <position position="7"/>
    </location>
</feature>
<feature type="unsure residue" description="L or I" evidence="3">
    <location>
        <position position="9"/>
    </location>
</feature>
<sequence>GVDSSFLRL</sequence>
<keyword id="KW-0027">Amidation</keyword>
<keyword id="KW-0903">Direct protein sequencing</keyword>
<keyword id="KW-0527">Neuropeptide</keyword>
<keyword id="KW-0964">Secreted</keyword>
<organism>
    <name type="scientific">Austrophasma gansbaaiense</name>
    <name type="common">Gladiator</name>
    <name type="synonym">Heel-walker</name>
    <dbReference type="NCBI Taxonomy" id="253136"/>
    <lineage>
        <taxon>Eukaryota</taxon>
        <taxon>Metazoa</taxon>
        <taxon>Ecdysozoa</taxon>
        <taxon>Arthropoda</taxon>
        <taxon>Hexapoda</taxon>
        <taxon>Insecta</taxon>
        <taxon>Pterygota</taxon>
        <taxon>Neoptera</taxon>
        <taxon>Polyneoptera</taxon>
        <taxon>Mantophasmatodea</taxon>
        <taxon>Austrophasmatidae</taxon>
        <taxon>Austrophasma</taxon>
    </lineage>
</organism>